<name>PTXA_STUST</name>
<organism evidence="6">
    <name type="scientific">Stutzerimonas stutzeri</name>
    <name type="common">Pseudomonas stutzeri</name>
    <dbReference type="NCBI Taxonomy" id="316"/>
    <lineage>
        <taxon>Bacteria</taxon>
        <taxon>Pseudomonadati</taxon>
        <taxon>Pseudomonadota</taxon>
        <taxon>Gammaproteobacteria</taxon>
        <taxon>Pseudomonadales</taxon>
        <taxon>Pseudomonadaceae</taxon>
        <taxon>Stutzerimonas</taxon>
    </lineage>
</organism>
<gene>
    <name type="primary">ptxA</name>
</gene>
<reference evidence="6" key="1">
    <citation type="journal article" date="1998" name="J. Bacteriol.">
        <title>Molecular genetic analysis of phosphite and hypophosphite oxidation by Pseudomonas stutzeri WM88.</title>
        <authorList>
            <person name="Metcalf W.W."/>
            <person name="Wolfe R.S."/>
        </authorList>
    </citation>
    <scope>NUCLEOTIDE SEQUENCE [GENOMIC DNA]</scope>
    <scope>FUNCTION</scope>
    <source>
        <strain>WM88</strain>
    </source>
</reference>
<reference key="2">
    <citation type="journal article" date="2004" name="J. Bacteriol.">
        <title>Two C-P lyase operons in Pseudomonas stutzeri and their roles in the oxidation of phosphonates, phosphite, and hypophosphite.</title>
        <authorList>
            <person name="White A.K."/>
            <person name="Metcalf W.W."/>
        </authorList>
    </citation>
    <scope>FUNCTION</scope>
    <source>
        <strain>WM88</strain>
    </source>
</reference>
<sequence length="275" mass="29649">MTPHPIQDAVLRVDRLSVVYPGGVTALRDTSIAFRRGEFTVLLGLSGAGKSTLLRSLNRLVTPTGGSVTSELGELGSGSALRQHRRRTAMIFQHHQLIERQSALANVLTGRLAFHNTLRSLFPLPRADQEIALSCLARVGLADKALSRVDKLSGGQQQRVGIARALAQQPAIILADEPVASLDPATSVRVLGLLRDICKEDGITAIVSLHQLEYARRFADRVVGLADSQIVFDAAPSELTDAQLERIYAGRSTTQPANAPAEPPVMLEPSLEMSR</sequence>
<keyword id="KW-0067">ATP-binding</keyword>
<keyword id="KW-0997">Cell inner membrane</keyword>
<keyword id="KW-1003">Cell membrane</keyword>
<keyword id="KW-0472">Membrane</keyword>
<keyword id="KW-0547">Nucleotide-binding</keyword>
<keyword id="KW-1278">Translocase</keyword>
<keyword id="KW-0813">Transport</keyword>
<protein>
    <recommendedName>
        <fullName>Phosphite import ATP-binding protein PxtA</fullName>
        <ecNumber>7.6.2.-</ecNumber>
    </recommendedName>
</protein>
<accession>O69051</accession>
<comment type="function">
    <text evidence="4 5">Part of the ABC transporter complex PtxABC involved in phosphite import. Responsible for energy coupling to the transport system (Probable).</text>
</comment>
<comment type="catalytic activity">
    <reaction>
        <text>phosphite(out) + ATP + H2O = phosphite(in) + ADP + phosphate + H(+)</text>
        <dbReference type="Rhea" id="RHEA:48972"/>
        <dbReference type="ChEBI" id="CHEBI:15377"/>
        <dbReference type="ChEBI" id="CHEBI:15378"/>
        <dbReference type="ChEBI" id="CHEBI:30616"/>
        <dbReference type="ChEBI" id="CHEBI:36361"/>
        <dbReference type="ChEBI" id="CHEBI:43474"/>
        <dbReference type="ChEBI" id="CHEBI:456216"/>
    </reaction>
</comment>
<comment type="subunit">
    <text evidence="3">The complex is composed of two ATP-binding proteins (PtxA), two transmembrane proteins (PtxC) and a solute-binding protein (PtxB).</text>
</comment>
<comment type="subcellular location">
    <subcellularLocation>
        <location evidence="1">Cell inner membrane</location>
        <topology evidence="1">Peripheral membrane protein</topology>
    </subcellularLocation>
</comment>
<comment type="similarity">
    <text evidence="3">Belongs to the ABC transporter superfamily. Phosphonates importer (TC 3.A.1.9.1) family.</text>
</comment>
<dbReference type="EC" id="7.6.2.-"/>
<dbReference type="EMBL" id="AF061070">
    <property type="protein sequence ID" value="AAC71706.1"/>
    <property type="molecule type" value="Genomic_DNA"/>
</dbReference>
<dbReference type="SMR" id="O69051"/>
<dbReference type="OrthoDB" id="9802264at2"/>
<dbReference type="GO" id="GO:0005886">
    <property type="term" value="C:plasma membrane"/>
    <property type="evidence" value="ECO:0007669"/>
    <property type="project" value="UniProtKB-SubCell"/>
</dbReference>
<dbReference type="GO" id="GO:0015416">
    <property type="term" value="F:ABC-type phosphonate transporter activity"/>
    <property type="evidence" value="ECO:0007669"/>
    <property type="project" value="InterPro"/>
</dbReference>
<dbReference type="GO" id="GO:0005524">
    <property type="term" value="F:ATP binding"/>
    <property type="evidence" value="ECO:0007669"/>
    <property type="project" value="UniProtKB-KW"/>
</dbReference>
<dbReference type="GO" id="GO:0016887">
    <property type="term" value="F:ATP hydrolysis activity"/>
    <property type="evidence" value="ECO:0007669"/>
    <property type="project" value="InterPro"/>
</dbReference>
<dbReference type="CDD" id="cd03256">
    <property type="entry name" value="ABC_PhnC_transporter"/>
    <property type="match status" value="1"/>
</dbReference>
<dbReference type="Gene3D" id="3.40.50.300">
    <property type="entry name" value="P-loop containing nucleotide triphosphate hydrolases"/>
    <property type="match status" value="1"/>
</dbReference>
<dbReference type="InterPro" id="IPR003593">
    <property type="entry name" value="AAA+_ATPase"/>
</dbReference>
<dbReference type="InterPro" id="IPR003439">
    <property type="entry name" value="ABC_transporter-like_ATP-bd"/>
</dbReference>
<dbReference type="InterPro" id="IPR017871">
    <property type="entry name" value="ABC_transporter-like_CS"/>
</dbReference>
<dbReference type="InterPro" id="IPR012693">
    <property type="entry name" value="ABC_transpr_PhnC"/>
</dbReference>
<dbReference type="InterPro" id="IPR050086">
    <property type="entry name" value="MetN_ABC_transporter-like"/>
</dbReference>
<dbReference type="InterPro" id="IPR027417">
    <property type="entry name" value="P-loop_NTPase"/>
</dbReference>
<dbReference type="NCBIfam" id="TIGR02315">
    <property type="entry name" value="ABC_phnC"/>
    <property type="match status" value="1"/>
</dbReference>
<dbReference type="PANTHER" id="PTHR43166">
    <property type="entry name" value="AMINO ACID IMPORT ATP-BINDING PROTEIN"/>
    <property type="match status" value="1"/>
</dbReference>
<dbReference type="PANTHER" id="PTHR43166:SF6">
    <property type="entry name" value="PHOSPHONATES IMPORT ATP-BINDING PROTEIN PHNC"/>
    <property type="match status" value="1"/>
</dbReference>
<dbReference type="Pfam" id="PF00005">
    <property type="entry name" value="ABC_tran"/>
    <property type="match status" value="1"/>
</dbReference>
<dbReference type="SMART" id="SM00382">
    <property type="entry name" value="AAA"/>
    <property type="match status" value="1"/>
</dbReference>
<dbReference type="SUPFAM" id="SSF52540">
    <property type="entry name" value="P-loop containing nucleoside triphosphate hydrolases"/>
    <property type="match status" value="1"/>
</dbReference>
<dbReference type="PROSITE" id="PS00211">
    <property type="entry name" value="ABC_TRANSPORTER_1"/>
    <property type="match status" value="1"/>
</dbReference>
<dbReference type="PROSITE" id="PS50893">
    <property type="entry name" value="ABC_TRANSPORTER_2"/>
    <property type="match status" value="1"/>
</dbReference>
<dbReference type="PROSITE" id="PS51249">
    <property type="entry name" value="PHNC"/>
    <property type="match status" value="1"/>
</dbReference>
<evidence type="ECO:0000250" key="1"/>
<evidence type="ECO:0000256" key="2">
    <source>
        <dbReference type="SAM" id="MobiDB-lite"/>
    </source>
</evidence>
<evidence type="ECO:0000305" key="3"/>
<evidence type="ECO:0000305" key="4">
    <source>
    </source>
</evidence>
<evidence type="ECO:0000305" key="5">
    <source>
    </source>
</evidence>
<evidence type="ECO:0000312" key="6">
    <source>
        <dbReference type="EMBL" id="AAC71706.1"/>
    </source>
</evidence>
<feature type="chain" id="PRO_0000092954" description="Phosphite import ATP-binding protein PxtA">
    <location>
        <begin position="1"/>
        <end position="275"/>
    </location>
</feature>
<feature type="domain" description="ABC transporter">
    <location>
        <begin position="11"/>
        <end position="252"/>
    </location>
</feature>
<feature type="region of interest" description="Disordered" evidence="2">
    <location>
        <begin position="251"/>
        <end position="275"/>
    </location>
</feature>
<feature type="binding site" evidence="3">
    <location>
        <begin position="44"/>
        <end position="51"/>
    </location>
    <ligand>
        <name>ATP</name>
        <dbReference type="ChEBI" id="CHEBI:30616"/>
    </ligand>
</feature>
<proteinExistence type="inferred from homology"/>